<name>PD2RL_RAT</name>
<feature type="chain" id="PRO_0000370712" description="Prostaglandin D2 receptor-like">
    <location>
        <begin position="1"/>
        <end position="357"/>
    </location>
</feature>
<feature type="topological domain" description="Extracellular" evidence="2">
    <location>
        <begin position="1"/>
        <end position="20"/>
    </location>
</feature>
<feature type="transmembrane region" description="Helical; Name=1" evidence="2">
    <location>
        <begin position="21"/>
        <end position="41"/>
    </location>
</feature>
<feature type="topological domain" description="Cytoplasmic" evidence="2">
    <location>
        <begin position="42"/>
        <end position="57"/>
    </location>
</feature>
<feature type="transmembrane region" description="Helical; Name=2" evidence="2">
    <location>
        <begin position="58"/>
        <end position="78"/>
    </location>
</feature>
<feature type="topological domain" description="Extracellular" evidence="2">
    <location>
        <begin position="79"/>
        <end position="106"/>
    </location>
</feature>
<feature type="transmembrane region" description="Helical; Name=3" evidence="2">
    <location>
        <begin position="107"/>
        <end position="127"/>
    </location>
</feature>
<feature type="topological domain" description="Cytoplasmic" evidence="2">
    <location>
        <begin position="128"/>
        <end position="149"/>
    </location>
</feature>
<feature type="transmembrane region" description="Helical; Name=4" evidence="2">
    <location>
        <begin position="150"/>
        <end position="170"/>
    </location>
</feature>
<feature type="topological domain" description="Extracellular" evidence="2">
    <location>
        <begin position="171"/>
        <end position="194"/>
    </location>
</feature>
<feature type="transmembrane region" description="Helical; Name=5" evidence="2">
    <location>
        <begin position="195"/>
        <end position="215"/>
    </location>
</feature>
<feature type="topological domain" description="Cytoplasmic" evidence="2">
    <location>
        <begin position="216"/>
        <end position="261"/>
    </location>
</feature>
<feature type="transmembrane region" description="Helical; Name=6" evidence="2">
    <location>
        <begin position="262"/>
        <end position="282"/>
    </location>
</feature>
<feature type="topological domain" description="Extracellular" evidence="2">
    <location>
        <begin position="283"/>
        <end position="306"/>
    </location>
</feature>
<feature type="transmembrane region" description="Helical; Name=7" evidence="2">
    <location>
        <begin position="307"/>
        <end position="327"/>
    </location>
</feature>
<feature type="topological domain" description="Cytoplasmic" evidence="2">
    <location>
        <begin position="328"/>
        <end position="357"/>
    </location>
</feature>
<feature type="glycosylation site" description="N-linked (GlcNAc...) asparagine" evidence="2">
    <location>
        <position position="2"/>
    </location>
</feature>
<feature type="glycosylation site" description="N-linked (GlcNAc...) asparagine" evidence="2">
    <location>
        <position position="89"/>
    </location>
</feature>
<feature type="disulfide bond" evidence="3">
    <location>
        <begin position="104"/>
        <end position="182"/>
    </location>
</feature>
<accession>O35932</accession>
<keyword id="KW-1003">Cell membrane</keyword>
<keyword id="KW-1015">Disulfide bond</keyword>
<keyword id="KW-0297">G-protein coupled receptor</keyword>
<keyword id="KW-0325">Glycoprotein</keyword>
<keyword id="KW-0472">Membrane</keyword>
<keyword id="KW-0675">Receptor</keyword>
<keyword id="KW-1185">Reference proteome</keyword>
<keyword id="KW-0807">Transducer</keyword>
<keyword id="KW-0812">Transmembrane</keyword>
<keyword id="KW-1133">Transmembrane helix</keyword>
<dbReference type="EMBL" id="U92289">
    <property type="protein sequence ID" value="AAB71762.1"/>
    <property type="molecule type" value="mRNA"/>
</dbReference>
<dbReference type="RefSeq" id="NP_071577.1">
    <property type="nucleotide sequence ID" value="NM_022241.1"/>
</dbReference>
<dbReference type="SMR" id="O35932"/>
<dbReference type="FunCoup" id="O35932">
    <property type="interactions" value="135"/>
</dbReference>
<dbReference type="GlyCosmos" id="O35932">
    <property type="glycosylation" value="2 sites, No reported glycans"/>
</dbReference>
<dbReference type="GlyGen" id="O35932">
    <property type="glycosylation" value="2 sites"/>
</dbReference>
<dbReference type="PhosphoSitePlus" id="O35932"/>
<dbReference type="GeneID" id="63889"/>
<dbReference type="KEGG" id="rno:63889"/>
<dbReference type="AGR" id="RGD:619707"/>
<dbReference type="CTD" id="5729"/>
<dbReference type="RGD" id="1565108">
    <property type="gene designation" value="Ptgdrl"/>
</dbReference>
<dbReference type="InParanoid" id="O35932"/>
<dbReference type="PhylomeDB" id="O35932"/>
<dbReference type="Reactome" id="R-RNO-391908">
    <property type="pathway name" value="Prostanoid ligand receptors"/>
</dbReference>
<dbReference type="PRO" id="PR:O35932"/>
<dbReference type="Proteomes" id="UP000002494">
    <property type="component" value="Unplaced"/>
</dbReference>
<dbReference type="GO" id="GO:0005886">
    <property type="term" value="C:plasma membrane"/>
    <property type="evidence" value="ECO:0000318"/>
    <property type="project" value="GO_Central"/>
</dbReference>
<dbReference type="GO" id="GO:0004956">
    <property type="term" value="F:prostaglandin D receptor activity"/>
    <property type="evidence" value="ECO:0000318"/>
    <property type="project" value="GO_Central"/>
</dbReference>
<dbReference type="GO" id="GO:0006954">
    <property type="term" value="P:inflammatory response"/>
    <property type="evidence" value="ECO:0000318"/>
    <property type="project" value="GO_Central"/>
</dbReference>
<dbReference type="GO" id="GO:0007204">
    <property type="term" value="P:positive regulation of cytosolic calcium ion concentration"/>
    <property type="evidence" value="ECO:0000318"/>
    <property type="project" value="GO_Central"/>
</dbReference>
<dbReference type="FunFam" id="1.20.1070.10:FF:000175">
    <property type="entry name" value="Prostaglandin D2 receptor"/>
    <property type="match status" value="1"/>
</dbReference>
<dbReference type="Gene3D" id="1.20.1070.10">
    <property type="entry name" value="Rhodopsin 7-helix transmembrane proteins"/>
    <property type="match status" value="1"/>
</dbReference>
<dbReference type="InterPro" id="IPR000276">
    <property type="entry name" value="GPCR_Rhodpsn"/>
</dbReference>
<dbReference type="InterPro" id="IPR017452">
    <property type="entry name" value="GPCR_Rhodpsn_7TM"/>
</dbReference>
<dbReference type="InterPro" id="IPR000376">
    <property type="entry name" value="Pglndn_D_rcpt"/>
</dbReference>
<dbReference type="InterPro" id="IPR008365">
    <property type="entry name" value="Prostanoid_rcpt"/>
</dbReference>
<dbReference type="PANTHER" id="PTHR11866">
    <property type="entry name" value="G-PROTEIN COUPLED RECEPTOR FAMILY 1 MEMBER"/>
    <property type="match status" value="1"/>
</dbReference>
<dbReference type="PANTHER" id="PTHR11866:SF14">
    <property type="entry name" value="PROSTAGLANDIN D2 RECEPTOR"/>
    <property type="match status" value="1"/>
</dbReference>
<dbReference type="Pfam" id="PF00001">
    <property type="entry name" value="7tm_1"/>
    <property type="match status" value="1"/>
</dbReference>
<dbReference type="PRINTS" id="PR01788">
    <property type="entry name" value="PROSTANOIDR"/>
</dbReference>
<dbReference type="PRINTS" id="PR00854">
    <property type="entry name" value="PRSTNOIDDPR"/>
</dbReference>
<dbReference type="SUPFAM" id="SSF81321">
    <property type="entry name" value="Family A G protein-coupled receptor-like"/>
    <property type="match status" value="1"/>
</dbReference>
<dbReference type="PROSITE" id="PS50262">
    <property type="entry name" value="G_PROTEIN_RECEP_F1_2"/>
    <property type="match status" value="1"/>
</dbReference>
<sequence>MNESYRCQAATWVERGSSATMGGVLFSAGLLGNLLALVLLARSGLGSCRPGPLHPPPSVFYVLVCGLTVTHLLGKCLISPMVLAAYAQNRSLKELLPASGNQLCEAFAFLMSFFGLASTLQLLAMALECWLSLGHPFFYQRHITARRGVLVAPVAGAFSLAFCALPFAGFGKFVQYCPGTWCFIQMIHKKRSFSVIGFSVLYSSLMALLVLATVVCNLGAMSNLYAMHRRQRHHPRRCSRDRAQSGSDYRHGSPNPLEELDHFVLLALTTVLFTMCSLPLIYRAYYGAFKLVDRADGDSEDLQALRFLSVISIVDPWIFIIFRTSVFRMLFHKAFTRPLIYRNWCSHSWQTNMESTL</sequence>
<reference key="1">
    <citation type="journal article" date="1998" name="J. Neurochem.">
        <title>Dominant expression of rat prostanoid DP receptor mRNA in leptomeninges, inner segments of photoreceptor cells, iris epithelium, and ciliary processes.</title>
        <authorList>
            <person name="Gerashchenko D."/>
            <person name="Beuckmann C.T."/>
            <person name="Kanaoka Y."/>
            <person name="Eguchi N."/>
            <person name="Gordon W.C."/>
            <person name="Urade Y."/>
            <person name="Bazan N.G."/>
            <person name="Hayaishi O."/>
        </authorList>
    </citation>
    <scope>NUCLEOTIDE SEQUENCE [MRNA]</scope>
    <scope>TISSUE SPECIFICITY</scope>
    <source>
        <strain>Sprague-Dawley</strain>
        <tissue>Retina</tissue>
    </source>
</reference>
<reference key="2">
    <citation type="journal article" date="1983" name="Prostaglandins">
        <title>Pharmacological and cardiovascular properties of a hydantoin derivative, BW 245 C, with high affinity and selectivity for PGD2 receptors.</title>
        <authorList>
            <person name="Town M.H."/>
            <person name="Casals-Stenzel J."/>
            <person name="Schillinger E."/>
        </authorList>
    </citation>
    <scope>TISSUE SPECIFICITY</scope>
</reference>
<organism>
    <name type="scientific">Rattus norvegicus</name>
    <name type="common">Rat</name>
    <dbReference type="NCBI Taxonomy" id="10116"/>
    <lineage>
        <taxon>Eukaryota</taxon>
        <taxon>Metazoa</taxon>
        <taxon>Chordata</taxon>
        <taxon>Craniata</taxon>
        <taxon>Vertebrata</taxon>
        <taxon>Euteleostomi</taxon>
        <taxon>Mammalia</taxon>
        <taxon>Eutheria</taxon>
        <taxon>Euarchontoglires</taxon>
        <taxon>Glires</taxon>
        <taxon>Rodentia</taxon>
        <taxon>Myomorpha</taxon>
        <taxon>Muroidea</taxon>
        <taxon>Muridae</taxon>
        <taxon>Murinae</taxon>
        <taxon>Rattus</taxon>
    </lineage>
</organism>
<comment type="function">
    <text evidence="1">Receptor for prostaglandin D2 (PGD2). The activity of this receptor is mainly mediated by G(s) proteins that stimulate adenylate cyclase, resulting in an elevation of intracellular cAMP. A mobilization of calcium is also observed, but without formation of inositol 1,4,5-trisphosphate (By similarity).</text>
</comment>
<comment type="subcellular location">
    <subcellularLocation>
        <location evidence="6">Cell membrane</location>
        <topology evidence="6">Multi-pass membrane protein</topology>
    </subcellularLocation>
</comment>
<comment type="tissue specificity">
    <text evidence="4 5">Strongly expressed in eye and gastrointestinal tract (GIT), moderately in the brain and oviduct and weakly in the epididymis. In the eye, expressed in the epithelium of the iris and ciliary body and in photoreceptor cells of the retina. In the brain, expressed in leptomeninges, choroid plexus and spinal cord (sensory and motor neurons of the dorsal and ventral horns). In the stomach, expressed in the mucous-secreting goblet cells and the columnar epithelium. Expressed in platelets.</text>
</comment>
<comment type="similarity">
    <text evidence="3">Belongs to the G-protein coupled receptor 1 family.</text>
</comment>
<protein>
    <recommendedName>
        <fullName>Prostaglandin D2 receptor-like</fullName>
        <shortName>PGD receptor-like</shortName>
        <shortName>PGD2 receptor-like</shortName>
    </recommendedName>
    <alternativeName>
        <fullName>Prostanoid DP receptor-like</fullName>
    </alternativeName>
</protein>
<gene>
    <name type="primary">Ptgdrl</name>
    <name type="synonym">Ptgdr2</name>
</gene>
<proteinExistence type="evidence at transcript level"/>
<evidence type="ECO:0000250" key="1"/>
<evidence type="ECO:0000255" key="2"/>
<evidence type="ECO:0000255" key="3">
    <source>
        <dbReference type="PROSITE-ProRule" id="PRU00521"/>
    </source>
</evidence>
<evidence type="ECO:0000269" key="4">
    <source>
    </source>
</evidence>
<evidence type="ECO:0000269" key="5">
    <source>
    </source>
</evidence>
<evidence type="ECO:0000305" key="6"/>